<organism>
    <name type="scientific">Thermococcus kodakarensis (strain ATCC BAA-918 / JCM 12380 / KOD1)</name>
    <name type="common">Pyrococcus kodakaraensis (strain KOD1)</name>
    <dbReference type="NCBI Taxonomy" id="69014"/>
    <lineage>
        <taxon>Archaea</taxon>
        <taxon>Methanobacteriati</taxon>
        <taxon>Methanobacteriota</taxon>
        <taxon>Thermococci</taxon>
        <taxon>Thermococcales</taxon>
        <taxon>Thermococcaceae</taxon>
        <taxon>Thermococcus</taxon>
    </lineage>
</organism>
<gene>
    <name type="primary">rpl32e</name>
    <name type="ordered locus">TK1524</name>
</gene>
<comment type="subunit">
    <text evidence="1">Part of the 50S ribosomal subunit.</text>
</comment>
<comment type="similarity">
    <text evidence="2">Belongs to the eukaryotic ribosomal protein eL32 family.</text>
</comment>
<evidence type="ECO:0000269" key="1">
    <source>
    </source>
</evidence>
<evidence type="ECO:0000305" key="2"/>
<evidence type="ECO:0007744" key="3">
    <source>
        <dbReference type="PDB" id="6SKF"/>
    </source>
</evidence>
<evidence type="ECO:0007744" key="4">
    <source>
        <dbReference type="PDB" id="6SKG"/>
    </source>
</evidence>
<evidence type="ECO:0007744" key="5">
    <source>
        <dbReference type="PDB" id="6TH6"/>
    </source>
</evidence>
<proteinExistence type="evidence at protein level"/>
<accession>Q5JJG5</accession>
<protein>
    <recommendedName>
        <fullName evidence="2">Large ribosomal subunit protein eL32</fullName>
    </recommendedName>
    <alternativeName>
        <fullName>50S ribosomal protein L32e</fullName>
    </alternativeName>
</protein>
<reference key="1">
    <citation type="journal article" date="2005" name="Genome Res.">
        <title>Complete genome sequence of the hyperthermophilic archaeon Thermococcus kodakaraensis KOD1 and comparison with Pyrococcus genomes.</title>
        <authorList>
            <person name="Fukui T."/>
            <person name="Atomi H."/>
            <person name="Kanai T."/>
            <person name="Matsumi R."/>
            <person name="Fujiwara S."/>
            <person name="Imanaka T."/>
        </authorList>
    </citation>
    <scope>NUCLEOTIDE SEQUENCE [LARGE SCALE GENOMIC DNA]</scope>
    <source>
        <strain>ATCC BAA-918 / JCM 12380 / KOD1</strain>
    </source>
</reference>
<reference evidence="3 4 5" key="2">
    <citation type="journal article" date="2020" name="Nature">
        <title>Dynamic RNA acetylation revealed by quantitative cross-evolutionary mapping.</title>
        <authorList>
            <person name="Sas-Chen A."/>
            <person name="Thomas J.M."/>
            <person name="Matzov D."/>
            <person name="Taoka M."/>
            <person name="Nance K.D."/>
            <person name="Nir R."/>
            <person name="Bryson K.M."/>
            <person name="Shachar R."/>
            <person name="Liman G.L.S."/>
            <person name="Burkhart B.W."/>
            <person name="Gamage S.T."/>
            <person name="Nobe Y."/>
            <person name="Briney C.A."/>
            <person name="Levy M.J."/>
            <person name="Fuchs R.T."/>
            <person name="Robb G.B."/>
            <person name="Hartmann J."/>
            <person name="Sharma S."/>
            <person name="Lin Q."/>
            <person name="Florens L."/>
            <person name="Washburn M.P."/>
            <person name="Isobe T."/>
            <person name="Santangelo T.J."/>
            <person name="Shalev-Benami M."/>
            <person name="Meier J.L."/>
            <person name="Schwartz S."/>
        </authorList>
    </citation>
    <scope>STRUCTURE BY ELECTRON MICROSCOPY (2.55 ANGSTROMS) IN 70S RIBOSOME</scope>
    <scope>SUBUNIT</scope>
    <source>
        <strain>ATCC BAA-918 / TS559</strain>
    </source>
</reference>
<name>RL32_THEKO</name>
<keyword id="KW-0002">3D-structure</keyword>
<keyword id="KW-1185">Reference proteome</keyword>
<keyword id="KW-0687">Ribonucleoprotein</keyword>
<keyword id="KW-0689">Ribosomal protein</keyword>
<sequence length="126" mass="14713">MNEKARLLRIRAKLKRKKPRFLRQEWWRYPKFKNDPKWRRPKGIDSKMRLKKKGKPRSPSIGWSSPKAVRGLHPSGYEEVLVHNVKELEAIDPTRQAARIAGTVGARKREMILARAKELGVKVLNP</sequence>
<feature type="chain" id="PRO_0000131163" description="Large ribosomal subunit protein eL32">
    <location>
        <begin position="1"/>
        <end position="126"/>
    </location>
</feature>
<dbReference type="EMBL" id="AP006878">
    <property type="protein sequence ID" value="BAD85713.1"/>
    <property type="molecule type" value="Genomic_DNA"/>
</dbReference>
<dbReference type="RefSeq" id="WP_011250475.1">
    <property type="nucleotide sequence ID" value="NC_006624.1"/>
</dbReference>
<dbReference type="PDB" id="6SKF">
    <property type="method" value="EM"/>
    <property type="resolution" value="2.95 A"/>
    <property type="chains" value="Bd=1-125"/>
</dbReference>
<dbReference type="PDB" id="6SKG">
    <property type="method" value="EM"/>
    <property type="resolution" value="2.65 A"/>
    <property type="chains" value="Bd=1-125"/>
</dbReference>
<dbReference type="PDB" id="6TH6">
    <property type="method" value="EM"/>
    <property type="resolution" value="2.55 A"/>
    <property type="chains" value="Bd=1-125"/>
</dbReference>
<dbReference type="PDBsum" id="6SKF"/>
<dbReference type="PDBsum" id="6SKG"/>
<dbReference type="PDBsum" id="6TH6"/>
<dbReference type="EMDB" id="EMD-10223"/>
<dbReference type="EMDB" id="EMD-10224"/>
<dbReference type="EMDB" id="EMD-10503"/>
<dbReference type="SMR" id="Q5JJG5"/>
<dbReference type="FunCoup" id="Q5JJG5">
    <property type="interactions" value="165"/>
</dbReference>
<dbReference type="STRING" id="69014.TK1524"/>
<dbReference type="EnsemblBacteria" id="BAD85713">
    <property type="protein sequence ID" value="BAD85713"/>
    <property type="gene ID" value="TK1524"/>
</dbReference>
<dbReference type="GeneID" id="78448052"/>
<dbReference type="KEGG" id="tko:TK1524"/>
<dbReference type="PATRIC" id="fig|69014.16.peg.1484"/>
<dbReference type="eggNOG" id="arCOG00781">
    <property type="taxonomic scope" value="Archaea"/>
</dbReference>
<dbReference type="HOGENOM" id="CLU_071479_3_1_2"/>
<dbReference type="InParanoid" id="Q5JJG5"/>
<dbReference type="OrthoDB" id="372100at2157"/>
<dbReference type="PhylomeDB" id="Q5JJG5"/>
<dbReference type="Proteomes" id="UP000000536">
    <property type="component" value="Chromosome"/>
</dbReference>
<dbReference type="GO" id="GO:0022625">
    <property type="term" value="C:cytosolic large ribosomal subunit"/>
    <property type="evidence" value="ECO:0000318"/>
    <property type="project" value="GO_Central"/>
</dbReference>
<dbReference type="GO" id="GO:0003735">
    <property type="term" value="F:structural constituent of ribosome"/>
    <property type="evidence" value="ECO:0007669"/>
    <property type="project" value="InterPro"/>
</dbReference>
<dbReference type="GO" id="GO:0006412">
    <property type="term" value="P:translation"/>
    <property type="evidence" value="ECO:0007669"/>
    <property type="project" value="UniProtKB-UniRule"/>
</dbReference>
<dbReference type="CDD" id="cd00513">
    <property type="entry name" value="Ribosomal_L32_L32e"/>
    <property type="match status" value="1"/>
</dbReference>
<dbReference type="HAMAP" id="MF_00810">
    <property type="entry name" value="Ribosomal_eL32"/>
    <property type="match status" value="1"/>
</dbReference>
<dbReference type="InterPro" id="IPR001515">
    <property type="entry name" value="Ribosomal_eL32"/>
</dbReference>
<dbReference type="InterPro" id="IPR023654">
    <property type="entry name" value="Ribosomal_eL32_arc"/>
</dbReference>
<dbReference type="InterPro" id="IPR018263">
    <property type="entry name" value="Ribosomal_eL32_CS"/>
</dbReference>
<dbReference type="InterPro" id="IPR036351">
    <property type="entry name" value="Ribosomal_eL32_sf"/>
</dbReference>
<dbReference type="NCBIfam" id="NF006332">
    <property type="entry name" value="PRK08562.1"/>
    <property type="match status" value="1"/>
</dbReference>
<dbReference type="PANTHER" id="PTHR23413">
    <property type="entry name" value="60S RIBOSOMAL PROTEIN L32 AND DNA-DIRECTED RNA POLYMERASE II, SUBUNIT N"/>
    <property type="match status" value="1"/>
</dbReference>
<dbReference type="PANTHER" id="PTHR23413:SF1">
    <property type="entry name" value="RIBOSOMAL PROTEIN L32"/>
    <property type="match status" value="1"/>
</dbReference>
<dbReference type="Pfam" id="PF01655">
    <property type="entry name" value="Ribosomal_L32e"/>
    <property type="match status" value="1"/>
</dbReference>
<dbReference type="SMART" id="SM01393">
    <property type="entry name" value="Ribosomal_L32e"/>
    <property type="match status" value="1"/>
</dbReference>
<dbReference type="SUPFAM" id="SSF52042">
    <property type="entry name" value="Ribosomal protein L32e"/>
    <property type="match status" value="1"/>
</dbReference>
<dbReference type="PROSITE" id="PS00580">
    <property type="entry name" value="RIBOSOMAL_L32E"/>
    <property type="match status" value="1"/>
</dbReference>